<keyword id="KW-0066">ATP synthesis</keyword>
<keyword id="KW-1003">Cell membrane</keyword>
<keyword id="KW-0139">CF(1)</keyword>
<keyword id="KW-0375">Hydrogen ion transport</keyword>
<keyword id="KW-0406">Ion transport</keyword>
<keyword id="KW-0472">Membrane</keyword>
<keyword id="KW-1185">Reference proteome</keyword>
<keyword id="KW-0813">Transport</keyword>
<gene>
    <name evidence="1" type="primary">atpG</name>
    <name type="ordered locus">BBR47_54490</name>
</gene>
<name>ATPG_BREBN</name>
<organism>
    <name type="scientific">Brevibacillus brevis (strain 47 / JCM 6285 / NBRC 100599)</name>
    <dbReference type="NCBI Taxonomy" id="358681"/>
    <lineage>
        <taxon>Bacteria</taxon>
        <taxon>Bacillati</taxon>
        <taxon>Bacillota</taxon>
        <taxon>Bacilli</taxon>
        <taxon>Bacillales</taxon>
        <taxon>Paenibacillaceae</taxon>
        <taxon>Brevibacillus</taxon>
    </lineage>
</organism>
<dbReference type="EMBL" id="AP008955">
    <property type="protein sequence ID" value="BAH46426.1"/>
    <property type="molecule type" value="Genomic_DNA"/>
</dbReference>
<dbReference type="RefSeq" id="WP_015893619.1">
    <property type="nucleotide sequence ID" value="NC_012491.1"/>
</dbReference>
<dbReference type="SMR" id="C0Z777"/>
<dbReference type="STRING" id="358681.BBR47_54490"/>
<dbReference type="KEGG" id="bbe:BBR47_54490"/>
<dbReference type="eggNOG" id="COG0224">
    <property type="taxonomic scope" value="Bacteria"/>
</dbReference>
<dbReference type="HOGENOM" id="CLU_050669_0_1_9"/>
<dbReference type="Proteomes" id="UP000001877">
    <property type="component" value="Chromosome"/>
</dbReference>
<dbReference type="GO" id="GO:0005886">
    <property type="term" value="C:plasma membrane"/>
    <property type="evidence" value="ECO:0007669"/>
    <property type="project" value="UniProtKB-SubCell"/>
</dbReference>
<dbReference type="GO" id="GO:0045259">
    <property type="term" value="C:proton-transporting ATP synthase complex"/>
    <property type="evidence" value="ECO:0007669"/>
    <property type="project" value="UniProtKB-KW"/>
</dbReference>
<dbReference type="GO" id="GO:0005524">
    <property type="term" value="F:ATP binding"/>
    <property type="evidence" value="ECO:0007669"/>
    <property type="project" value="UniProtKB-UniRule"/>
</dbReference>
<dbReference type="GO" id="GO:0046933">
    <property type="term" value="F:proton-transporting ATP synthase activity, rotational mechanism"/>
    <property type="evidence" value="ECO:0007669"/>
    <property type="project" value="UniProtKB-UniRule"/>
</dbReference>
<dbReference type="GO" id="GO:0042777">
    <property type="term" value="P:proton motive force-driven plasma membrane ATP synthesis"/>
    <property type="evidence" value="ECO:0007669"/>
    <property type="project" value="UniProtKB-UniRule"/>
</dbReference>
<dbReference type="CDD" id="cd12151">
    <property type="entry name" value="F1-ATPase_gamma"/>
    <property type="match status" value="1"/>
</dbReference>
<dbReference type="FunFam" id="1.10.287.80:FF:000001">
    <property type="entry name" value="ATP synthase gamma chain"/>
    <property type="match status" value="1"/>
</dbReference>
<dbReference type="FunFam" id="3.40.1380.10:FF:000002">
    <property type="entry name" value="ATP synthase gamma chain"/>
    <property type="match status" value="1"/>
</dbReference>
<dbReference type="Gene3D" id="3.40.1380.10">
    <property type="match status" value="1"/>
</dbReference>
<dbReference type="Gene3D" id="1.10.287.80">
    <property type="entry name" value="ATP synthase, gamma subunit, helix hairpin domain"/>
    <property type="match status" value="1"/>
</dbReference>
<dbReference type="HAMAP" id="MF_00815">
    <property type="entry name" value="ATP_synth_gamma_bact"/>
    <property type="match status" value="1"/>
</dbReference>
<dbReference type="InterPro" id="IPR035968">
    <property type="entry name" value="ATP_synth_F1_ATPase_gsu"/>
</dbReference>
<dbReference type="InterPro" id="IPR000131">
    <property type="entry name" value="ATP_synth_F1_gsu"/>
</dbReference>
<dbReference type="InterPro" id="IPR023632">
    <property type="entry name" value="ATP_synth_F1_gsu_CS"/>
</dbReference>
<dbReference type="NCBIfam" id="TIGR01146">
    <property type="entry name" value="ATPsyn_F1gamma"/>
    <property type="match status" value="1"/>
</dbReference>
<dbReference type="PANTHER" id="PTHR11693">
    <property type="entry name" value="ATP SYNTHASE GAMMA CHAIN"/>
    <property type="match status" value="1"/>
</dbReference>
<dbReference type="PANTHER" id="PTHR11693:SF22">
    <property type="entry name" value="ATP SYNTHASE SUBUNIT GAMMA, MITOCHONDRIAL"/>
    <property type="match status" value="1"/>
</dbReference>
<dbReference type="Pfam" id="PF00231">
    <property type="entry name" value="ATP-synt"/>
    <property type="match status" value="1"/>
</dbReference>
<dbReference type="PRINTS" id="PR00126">
    <property type="entry name" value="ATPASEGAMMA"/>
</dbReference>
<dbReference type="SUPFAM" id="SSF52943">
    <property type="entry name" value="ATP synthase (F1-ATPase), gamma subunit"/>
    <property type="match status" value="1"/>
</dbReference>
<dbReference type="PROSITE" id="PS00153">
    <property type="entry name" value="ATPASE_GAMMA"/>
    <property type="match status" value="1"/>
</dbReference>
<protein>
    <recommendedName>
        <fullName evidence="1">ATP synthase gamma chain</fullName>
    </recommendedName>
    <alternativeName>
        <fullName evidence="1">ATP synthase F1 sector gamma subunit</fullName>
    </alternativeName>
    <alternativeName>
        <fullName evidence="1">F-ATPase gamma subunit</fullName>
    </alternativeName>
</protein>
<comment type="function">
    <text evidence="1">Produces ATP from ADP in the presence of a proton gradient across the membrane. The gamma chain is believed to be important in regulating ATPase activity and the flow of protons through the CF(0) complex.</text>
</comment>
<comment type="subunit">
    <text evidence="1">F-type ATPases have 2 components, CF(1) - the catalytic core - and CF(0) - the membrane proton channel. CF(1) has five subunits: alpha(3), beta(3), gamma(1), delta(1), epsilon(1). CF(0) has three main subunits: a, b and c.</text>
</comment>
<comment type="subcellular location">
    <subcellularLocation>
        <location evidence="1">Cell membrane</location>
        <topology evidence="1">Peripheral membrane protein</topology>
    </subcellularLocation>
</comment>
<comment type="similarity">
    <text evidence="1">Belongs to the ATPase gamma chain family.</text>
</comment>
<accession>C0Z777</accession>
<sequence>MAKGIREIRRSIKSKKDMRQITKAMKMVAAAKLRRNQDKAEAARPYADKIQEVIASIASGTSGSKHPMLQNRPVKKTGYIVITSDRGLAGGYNANILRKVVNTINEKHKSKDEYGIFVIGRKGRDFFSKRNYPLLDEVTGLPTSPAFADIKKIAGAAVQMFENEQIDELYLCYNKFQSAISQIPTVKQLLPLEAPESNNARAINYEYEPSSEEVLADLLPKYAETLVYSALLEAKASEEGSRMTAMGNATDNATDMINRLTLSYNRARQAAITQEISEIVAGANAQA</sequence>
<feature type="chain" id="PRO_1000148603" description="ATP synthase gamma chain">
    <location>
        <begin position="1"/>
        <end position="287"/>
    </location>
</feature>
<proteinExistence type="inferred from homology"/>
<reference key="1">
    <citation type="submission" date="2005-03" db="EMBL/GenBank/DDBJ databases">
        <title>Brevibacillus brevis strain 47, complete genome.</title>
        <authorList>
            <person name="Hosoyama A."/>
            <person name="Yamada R."/>
            <person name="Hongo Y."/>
            <person name="Terui Y."/>
            <person name="Ankai A."/>
            <person name="Masuyama W."/>
            <person name="Sekiguchi M."/>
            <person name="Takeda T."/>
            <person name="Asano K."/>
            <person name="Ohji S."/>
            <person name="Ichikawa N."/>
            <person name="Narita S."/>
            <person name="Aoki N."/>
            <person name="Miura H."/>
            <person name="Matsushita S."/>
            <person name="Sekigawa T."/>
            <person name="Yamagata H."/>
            <person name="Yoshikawa H."/>
            <person name="Udaka S."/>
            <person name="Tanikawa S."/>
            <person name="Fujita N."/>
        </authorList>
    </citation>
    <scope>NUCLEOTIDE SEQUENCE [LARGE SCALE GENOMIC DNA]</scope>
    <source>
        <strain>47 / JCM 6285 / NBRC 100599</strain>
    </source>
</reference>
<evidence type="ECO:0000255" key="1">
    <source>
        <dbReference type="HAMAP-Rule" id="MF_00815"/>
    </source>
</evidence>